<keyword id="KW-0067">ATP-binding</keyword>
<keyword id="KW-0963">Cytoplasm</keyword>
<keyword id="KW-0347">Helicase</keyword>
<keyword id="KW-0378">Hydrolase</keyword>
<keyword id="KW-0472">Membrane</keyword>
<keyword id="KW-0509">mRNA transport</keyword>
<keyword id="KW-0906">Nuclear pore complex</keyword>
<keyword id="KW-0547">Nucleotide-binding</keyword>
<keyword id="KW-0539">Nucleus</keyword>
<keyword id="KW-0653">Protein transport</keyword>
<keyword id="KW-1185">Reference proteome</keyword>
<keyword id="KW-0694">RNA-binding</keyword>
<keyword id="KW-0811">Translocation</keyword>
<keyword id="KW-0813">Transport</keyword>
<dbReference type="EC" id="3.6.4.13"/>
<dbReference type="EMBL" id="AACD01000130">
    <property type="protein sequence ID" value="EAA61845.1"/>
    <property type="molecule type" value="Genomic_DNA"/>
</dbReference>
<dbReference type="EMBL" id="BN001304">
    <property type="protein sequence ID" value="CBF79845.1"/>
    <property type="molecule type" value="Genomic_DNA"/>
</dbReference>
<dbReference type="RefSeq" id="XP_680928.1">
    <property type="nucleotide sequence ID" value="XM_675836.1"/>
</dbReference>
<dbReference type="SMR" id="Q5AVM1"/>
<dbReference type="FunCoup" id="Q5AVM1">
    <property type="interactions" value="754"/>
</dbReference>
<dbReference type="STRING" id="227321.Q5AVM1"/>
<dbReference type="EnsemblFungi" id="CBF79845">
    <property type="protein sequence ID" value="CBF79845"/>
    <property type="gene ID" value="ANIA_07659"/>
</dbReference>
<dbReference type="KEGG" id="ani:ANIA_07659"/>
<dbReference type="VEuPathDB" id="FungiDB:AN7659"/>
<dbReference type="eggNOG" id="KOG0332">
    <property type="taxonomic scope" value="Eukaryota"/>
</dbReference>
<dbReference type="HOGENOM" id="CLU_003041_1_0_1"/>
<dbReference type="InParanoid" id="Q5AVM1"/>
<dbReference type="OMA" id="IAAETRW"/>
<dbReference type="OrthoDB" id="10265785at2759"/>
<dbReference type="Proteomes" id="UP000000560">
    <property type="component" value="Chromosome IV"/>
</dbReference>
<dbReference type="GO" id="GO:0005934">
    <property type="term" value="C:cellular bud tip"/>
    <property type="evidence" value="ECO:0007669"/>
    <property type="project" value="EnsemblFungi"/>
</dbReference>
<dbReference type="GO" id="GO:0010494">
    <property type="term" value="C:cytoplasmic stress granule"/>
    <property type="evidence" value="ECO:0000318"/>
    <property type="project" value="GO_Central"/>
</dbReference>
<dbReference type="GO" id="GO:0031965">
    <property type="term" value="C:nuclear membrane"/>
    <property type="evidence" value="ECO:0007669"/>
    <property type="project" value="UniProtKB-SubCell"/>
</dbReference>
<dbReference type="GO" id="GO:0044614">
    <property type="term" value="C:nuclear pore cytoplasmic filaments"/>
    <property type="evidence" value="ECO:0007669"/>
    <property type="project" value="EnsemblFungi"/>
</dbReference>
<dbReference type="GO" id="GO:0005634">
    <property type="term" value="C:nucleus"/>
    <property type="evidence" value="ECO:0000318"/>
    <property type="project" value="GO_Central"/>
</dbReference>
<dbReference type="GO" id="GO:0005524">
    <property type="term" value="F:ATP binding"/>
    <property type="evidence" value="ECO:0007669"/>
    <property type="project" value="UniProtKB-KW"/>
</dbReference>
<dbReference type="GO" id="GO:0016887">
    <property type="term" value="F:ATP hydrolysis activity"/>
    <property type="evidence" value="ECO:0007669"/>
    <property type="project" value="RHEA"/>
</dbReference>
<dbReference type="GO" id="GO:0000822">
    <property type="term" value="F:inositol hexakisphosphate binding"/>
    <property type="evidence" value="ECO:0007669"/>
    <property type="project" value="EnsemblFungi"/>
</dbReference>
<dbReference type="GO" id="GO:0003729">
    <property type="term" value="F:mRNA binding"/>
    <property type="evidence" value="ECO:0000318"/>
    <property type="project" value="GO_Central"/>
</dbReference>
<dbReference type="GO" id="GO:0003724">
    <property type="term" value="F:RNA helicase activity"/>
    <property type="evidence" value="ECO:0000318"/>
    <property type="project" value="GO_Central"/>
</dbReference>
<dbReference type="GO" id="GO:0016973">
    <property type="term" value="P:poly(A)+ mRNA export from nucleus"/>
    <property type="evidence" value="ECO:0000318"/>
    <property type="project" value="GO_Central"/>
</dbReference>
<dbReference type="GO" id="GO:0015031">
    <property type="term" value="P:protein transport"/>
    <property type="evidence" value="ECO:0007669"/>
    <property type="project" value="UniProtKB-KW"/>
</dbReference>
<dbReference type="GO" id="GO:0006415">
    <property type="term" value="P:translational termination"/>
    <property type="evidence" value="ECO:0007669"/>
    <property type="project" value="EnsemblFungi"/>
</dbReference>
<dbReference type="GO" id="GO:0006409">
    <property type="term" value="P:tRNA export from nucleus"/>
    <property type="evidence" value="ECO:0007669"/>
    <property type="project" value="EnsemblFungi"/>
</dbReference>
<dbReference type="CDD" id="cd17963">
    <property type="entry name" value="DEADc_DDX19_DDX25"/>
    <property type="match status" value="1"/>
</dbReference>
<dbReference type="CDD" id="cd18787">
    <property type="entry name" value="SF2_C_DEAD"/>
    <property type="match status" value="1"/>
</dbReference>
<dbReference type="FunFam" id="3.40.50.300:FF:000849">
    <property type="entry name" value="ATP-dependent RNA helicase DBP5"/>
    <property type="match status" value="1"/>
</dbReference>
<dbReference type="Gene3D" id="3.40.50.300">
    <property type="entry name" value="P-loop containing nucleotide triphosphate hydrolases"/>
    <property type="match status" value="2"/>
</dbReference>
<dbReference type="InterPro" id="IPR011545">
    <property type="entry name" value="DEAD/DEAH_box_helicase_dom"/>
</dbReference>
<dbReference type="InterPro" id="IPR014001">
    <property type="entry name" value="Helicase_ATP-bd"/>
</dbReference>
<dbReference type="InterPro" id="IPR001650">
    <property type="entry name" value="Helicase_C-like"/>
</dbReference>
<dbReference type="InterPro" id="IPR027417">
    <property type="entry name" value="P-loop_NTPase"/>
</dbReference>
<dbReference type="InterPro" id="IPR000629">
    <property type="entry name" value="RNA-helicase_DEAD-box_CS"/>
</dbReference>
<dbReference type="InterPro" id="IPR014014">
    <property type="entry name" value="RNA_helicase_DEAD_Q_motif"/>
</dbReference>
<dbReference type="PANTHER" id="PTHR47958">
    <property type="entry name" value="ATP-DEPENDENT RNA HELICASE DBP3"/>
    <property type="match status" value="1"/>
</dbReference>
<dbReference type="Pfam" id="PF00270">
    <property type="entry name" value="DEAD"/>
    <property type="match status" value="1"/>
</dbReference>
<dbReference type="Pfam" id="PF00271">
    <property type="entry name" value="Helicase_C"/>
    <property type="match status" value="1"/>
</dbReference>
<dbReference type="SMART" id="SM00487">
    <property type="entry name" value="DEXDc"/>
    <property type="match status" value="1"/>
</dbReference>
<dbReference type="SMART" id="SM00490">
    <property type="entry name" value="HELICc"/>
    <property type="match status" value="1"/>
</dbReference>
<dbReference type="SUPFAM" id="SSF52540">
    <property type="entry name" value="P-loop containing nucleoside triphosphate hydrolases"/>
    <property type="match status" value="1"/>
</dbReference>
<dbReference type="PROSITE" id="PS00039">
    <property type="entry name" value="DEAD_ATP_HELICASE"/>
    <property type="match status" value="1"/>
</dbReference>
<dbReference type="PROSITE" id="PS51192">
    <property type="entry name" value="HELICASE_ATP_BIND_1"/>
    <property type="match status" value="1"/>
</dbReference>
<dbReference type="PROSITE" id="PS51194">
    <property type="entry name" value="HELICASE_CTER"/>
    <property type="match status" value="1"/>
</dbReference>
<dbReference type="PROSITE" id="PS51195">
    <property type="entry name" value="Q_MOTIF"/>
    <property type="match status" value="1"/>
</dbReference>
<comment type="function">
    <text evidence="1">ATP-dependent RNA helicase associated with the nuclear pore complex and essential for mRNA export from the nucleus. May participate in a terminal step of mRNA export through the removal of proteins that accompany mRNA through the nucleopore complex. May also be involved in early transcription (By similarity).</text>
</comment>
<comment type="catalytic activity">
    <reaction>
        <text>ATP + H2O = ADP + phosphate + H(+)</text>
        <dbReference type="Rhea" id="RHEA:13065"/>
        <dbReference type="ChEBI" id="CHEBI:15377"/>
        <dbReference type="ChEBI" id="CHEBI:15378"/>
        <dbReference type="ChEBI" id="CHEBI:30616"/>
        <dbReference type="ChEBI" id="CHEBI:43474"/>
        <dbReference type="ChEBI" id="CHEBI:456216"/>
        <dbReference type="EC" id="3.6.4.13"/>
    </reaction>
</comment>
<comment type="subunit">
    <text evidence="1">Associates with the nuclear pore complex.</text>
</comment>
<comment type="subcellular location">
    <subcellularLocation>
        <location evidence="1">Cytoplasm</location>
    </subcellularLocation>
    <subcellularLocation>
        <location>Nucleus</location>
        <location>Nuclear pore complex</location>
    </subcellularLocation>
    <subcellularLocation>
        <location evidence="1">Nucleus membrane</location>
        <topology evidence="1">Peripheral membrane protein</topology>
        <orientation evidence="1">Cytoplasmic side</orientation>
    </subcellularLocation>
    <text evidence="1">Nuclear pore complex cytoplasmic fibrils.</text>
</comment>
<comment type="domain">
    <text>The Q motif is unique to and characteristic of the DEAD box family of RNA helicases and controls ATP binding and hydrolysis.</text>
</comment>
<comment type="similarity">
    <text evidence="5">Belongs to the DEAD box helicase family. DDX19/DBP5 subfamily.</text>
</comment>
<sequence length="477" mass="52392">MASDAPTGGSLADRISNPAETTEPVADKAQLDGAASNQGGSDLAEPEYNVEVKLSDLQADPNNPLYSVKNFEDLGLDPRILQGLSAMNFRKPSKIQERALPLLMGNPPKNLVGQSQSGTGKTAAFVLNILSRLDLSSEQAQKTPQALILAPTRELARQIVGVIQVMGKFLDGLHIGTAVPADTNARPTRMEASVVVGTPGTVMDMIKKRIMVAAKLKVIVLDEADNMLDQQGLGDQCIRVKALLPRDIQVVLFSATFPAHVHQYASKFAPAANELTLQHEELTVEGIKQLYLDCASEEDKYRTLVQLYGLLTVGSSIIFVKTRASAVEIERRMVAEGHTVASLTGGIEGSQRDQIIDQFRAGHAKVLITTNVLARGIDVSTVSMVINYDIPELHQPPNRPRQADFQTYLHRIGRTGRFGRVGVSISFVSNREEWEMLNQIQKYFNTDIQRIDTKDWDEVEDIIKKTIKNTRAQAGFR</sequence>
<proteinExistence type="inferred from homology"/>
<protein>
    <recommendedName>
        <fullName>ATP-dependent RNA helicase dbp5</fullName>
        <ecNumber>3.6.4.13</ecNumber>
    </recommendedName>
</protein>
<name>DBP5_EMENI</name>
<accession>Q5AVM1</accession>
<accession>C8VC14</accession>
<gene>
    <name type="primary">dbp5</name>
    <name type="ORF">AN7659</name>
</gene>
<organism>
    <name type="scientific">Emericella nidulans (strain FGSC A4 / ATCC 38163 / CBS 112.46 / NRRL 194 / M139)</name>
    <name type="common">Aspergillus nidulans</name>
    <dbReference type="NCBI Taxonomy" id="227321"/>
    <lineage>
        <taxon>Eukaryota</taxon>
        <taxon>Fungi</taxon>
        <taxon>Dikarya</taxon>
        <taxon>Ascomycota</taxon>
        <taxon>Pezizomycotina</taxon>
        <taxon>Eurotiomycetes</taxon>
        <taxon>Eurotiomycetidae</taxon>
        <taxon>Eurotiales</taxon>
        <taxon>Aspergillaceae</taxon>
        <taxon>Aspergillus</taxon>
        <taxon>Aspergillus subgen. Nidulantes</taxon>
    </lineage>
</organism>
<feature type="chain" id="PRO_0000232223" description="ATP-dependent RNA helicase dbp5">
    <location>
        <begin position="1"/>
        <end position="477"/>
    </location>
</feature>
<feature type="domain" description="Helicase ATP-binding" evidence="2">
    <location>
        <begin position="102"/>
        <end position="275"/>
    </location>
</feature>
<feature type="domain" description="Helicase C-terminal" evidence="3">
    <location>
        <begin position="303"/>
        <end position="459"/>
    </location>
</feature>
<feature type="region of interest" description="Disordered" evidence="4">
    <location>
        <begin position="1"/>
        <end position="43"/>
    </location>
</feature>
<feature type="short sequence motif" description="Q motif">
    <location>
        <begin position="69"/>
        <end position="97"/>
    </location>
</feature>
<feature type="short sequence motif" description="DEAD box">
    <location>
        <begin position="222"/>
        <end position="225"/>
    </location>
</feature>
<feature type="binding site" evidence="2">
    <location>
        <begin position="115"/>
        <end position="122"/>
    </location>
    <ligand>
        <name>ATP</name>
        <dbReference type="ChEBI" id="CHEBI:30616"/>
    </ligand>
</feature>
<evidence type="ECO:0000250" key="1"/>
<evidence type="ECO:0000255" key="2">
    <source>
        <dbReference type="PROSITE-ProRule" id="PRU00541"/>
    </source>
</evidence>
<evidence type="ECO:0000255" key="3">
    <source>
        <dbReference type="PROSITE-ProRule" id="PRU00542"/>
    </source>
</evidence>
<evidence type="ECO:0000256" key="4">
    <source>
        <dbReference type="SAM" id="MobiDB-lite"/>
    </source>
</evidence>
<evidence type="ECO:0000305" key="5"/>
<reference key="1">
    <citation type="journal article" date="2005" name="Nature">
        <title>Sequencing of Aspergillus nidulans and comparative analysis with A. fumigatus and A. oryzae.</title>
        <authorList>
            <person name="Galagan J.E."/>
            <person name="Calvo S.E."/>
            <person name="Cuomo C."/>
            <person name="Ma L.-J."/>
            <person name="Wortman J.R."/>
            <person name="Batzoglou S."/>
            <person name="Lee S.-I."/>
            <person name="Bastuerkmen M."/>
            <person name="Spevak C.C."/>
            <person name="Clutterbuck J."/>
            <person name="Kapitonov V."/>
            <person name="Jurka J."/>
            <person name="Scazzocchio C."/>
            <person name="Farman M.L."/>
            <person name="Butler J."/>
            <person name="Purcell S."/>
            <person name="Harris S."/>
            <person name="Braus G.H."/>
            <person name="Draht O."/>
            <person name="Busch S."/>
            <person name="D'Enfert C."/>
            <person name="Bouchier C."/>
            <person name="Goldman G.H."/>
            <person name="Bell-Pedersen D."/>
            <person name="Griffiths-Jones S."/>
            <person name="Doonan J.H."/>
            <person name="Yu J."/>
            <person name="Vienken K."/>
            <person name="Pain A."/>
            <person name="Freitag M."/>
            <person name="Selker E.U."/>
            <person name="Archer D.B."/>
            <person name="Penalva M.A."/>
            <person name="Oakley B.R."/>
            <person name="Momany M."/>
            <person name="Tanaka T."/>
            <person name="Kumagai T."/>
            <person name="Asai K."/>
            <person name="Machida M."/>
            <person name="Nierman W.C."/>
            <person name="Denning D.W."/>
            <person name="Caddick M.X."/>
            <person name="Hynes M."/>
            <person name="Paoletti M."/>
            <person name="Fischer R."/>
            <person name="Miller B.L."/>
            <person name="Dyer P.S."/>
            <person name="Sachs M.S."/>
            <person name="Osmani S.A."/>
            <person name="Birren B.W."/>
        </authorList>
    </citation>
    <scope>NUCLEOTIDE SEQUENCE [LARGE SCALE GENOMIC DNA]</scope>
    <source>
        <strain>FGSC A4 / ATCC 38163 / CBS 112.46 / NRRL 194 / M139</strain>
    </source>
</reference>
<reference key="2">
    <citation type="journal article" date="2009" name="Fungal Genet. Biol.">
        <title>The 2008 update of the Aspergillus nidulans genome annotation: a community effort.</title>
        <authorList>
            <person name="Wortman J.R."/>
            <person name="Gilsenan J.M."/>
            <person name="Joardar V."/>
            <person name="Deegan J."/>
            <person name="Clutterbuck J."/>
            <person name="Andersen M.R."/>
            <person name="Archer D."/>
            <person name="Bencina M."/>
            <person name="Braus G."/>
            <person name="Coutinho P."/>
            <person name="von Dohren H."/>
            <person name="Doonan J."/>
            <person name="Driessen A.J."/>
            <person name="Durek P."/>
            <person name="Espeso E."/>
            <person name="Fekete E."/>
            <person name="Flipphi M."/>
            <person name="Estrada C.G."/>
            <person name="Geysens S."/>
            <person name="Goldman G."/>
            <person name="de Groot P.W."/>
            <person name="Hansen K."/>
            <person name="Harris S.D."/>
            <person name="Heinekamp T."/>
            <person name="Helmstaedt K."/>
            <person name="Henrissat B."/>
            <person name="Hofmann G."/>
            <person name="Homan T."/>
            <person name="Horio T."/>
            <person name="Horiuchi H."/>
            <person name="James S."/>
            <person name="Jones M."/>
            <person name="Karaffa L."/>
            <person name="Karanyi Z."/>
            <person name="Kato M."/>
            <person name="Keller N."/>
            <person name="Kelly D.E."/>
            <person name="Kiel J.A."/>
            <person name="Kim J.M."/>
            <person name="van der Klei I.J."/>
            <person name="Klis F.M."/>
            <person name="Kovalchuk A."/>
            <person name="Krasevec N."/>
            <person name="Kubicek C.P."/>
            <person name="Liu B."/>
            <person name="Maccabe A."/>
            <person name="Meyer V."/>
            <person name="Mirabito P."/>
            <person name="Miskei M."/>
            <person name="Mos M."/>
            <person name="Mullins J."/>
            <person name="Nelson D.R."/>
            <person name="Nielsen J."/>
            <person name="Oakley B.R."/>
            <person name="Osmani S.A."/>
            <person name="Pakula T."/>
            <person name="Paszewski A."/>
            <person name="Paulsen I."/>
            <person name="Pilsyk S."/>
            <person name="Pocsi I."/>
            <person name="Punt P.J."/>
            <person name="Ram A.F."/>
            <person name="Ren Q."/>
            <person name="Robellet X."/>
            <person name="Robson G."/>
            <person name="Seiboth B."/>
            <person name="van Solingen P."/>
            <person name="Specht T."/>
            <person name="Sun J."/>
            <person name="Taheri-Talesh N."/>
            <person name="Takeshita N."/>
            <person name="Ussery D."/>
            <person name="vanKuyk P.A."/>
            <person name="Visser H."/>
            <person name="van de Vondervoort P.J."/>
            <person name="de Vries R.P."/>
            <person name="Walton J."/>
            <person name="Xiang X."/>
            <person name="Xiong Y."/>
            <person name="Zeng A.P."/>
            <person name="Brandt B.W."/>
            <person name="Cornell M.J."/>
            <person name="van den Hondel C.A."/>
            <person name="Visser J."/>
            <person name="Oliver S.G."/>
            <person name="Turner G."/>
        </authorList>
    </citation>
    <scope>GENOME REANNOTATION</scope>
    <source>
        <strain>FGSC A4 / ATCC 38163 / CBS 112.46 / NRRL 194 / M139</strain>
    </source>
</reference>